<reference evidence="3" key="1">
    <citation type="journal article" date="2004" name="J. Chromatogr. B">
        <title>Proteomics of the venom from the Amazonian scorpion Tityus cambridgei and the role of prolines on mass spectrometry analysis of toxins.</title>
        <authorList>
            <person name="Batista C.V.F."/>
            <person name="del Pozo L."/>
            <person name="Zamudio F.Z."/>
            <person name="Contreras S."/>
            <person name="Becerril B."/>
            <person name="Wanke E."/>
            <person name="Possani L.D."/>
        </authorList>
    </citation>
    <scope>PROTEIN SEQUENCE</scope>
    <scope>SUBCELLULAR LOCATION</scope>
    <scope>TISSUE SPECIFICITY</scope>
    <scope>MASS SPECTROMETRY</scope>
    <source>
        <tissue evidence="1">Venom</tissue>
    </source>
</reference>
<comment type="subcellular location">
    <subcellularLocation>
        <location evidence="1">Secreted</location>
    </subcellularLocation>
</comment>
<comment type="tissue specificity">
    <text evidence="1">Expressed by the venom gland.</text>
</comment>
<comment type="mass spectrometry" mass="7796.4" method="Electrospray" evidence="1"/>
<comment type="caution">
    <text evidence="3">This fragment sequence is identical to AC H1ZZI2, but it corresponds to a different peptide since its experimental molecular mass does not correspond to theoretical molecular mass of AC H1ZZI2.</text>
</comment>
<proteinExistence type="evidence at protein level"/>
<protein>
    <recommendedName>
        <fullName>Toxin To40</fullName>
    </recommendedName>
    <alternativeName>
        <fullName>Toxin Tc40</fullName>
    </alternativeName>
</protein>
<organism>
    <name type="scientific">Tityus obscurus</name>
    <name type="common">Amazonian scorpion</name>
    <name type="synonym">Tityus cambridgei</name>
    <dbReference type="NCBI Taxonomy" id="1221240"/>
    <lineage>
        <taxon>Eukaryota</taxon>
        <taxon>Metazoa</taxon>
        <taxon>Ecdysozoa</taxon>
        <taxon>Arthropoda</taxon>
        <taxon>Chelicerata</taxon>
        <taxon>Arachnida</taxon>
        <taxon>Scorpiones</taxon>
        <taxon>Buthida</taxon>
        <taxon>Buthoidea</taxon>
        <taxon>Buthidae</taxon>
        <taxon>Tityus</taxon>
    </lineage>
</organism>
<name>SC40_TITOB</name>
<accession>P84683</accession>
<sequence length="9" mass="1049">IKNGYPRDS</sequence>
<feature type="chain" id="PRO_0000066805" description="Toxin To40">
    <location>
        <begin position="1"/>
        <end position="9" status="greater than"/>
    </location>
</feature>
<feature type="non-terminal residue" evidence="2">
    <location>
        <position position="9"/>
    </location>
</feature>
<keyword id="KW-0903">Direct protein sequencing</keyword>
<keyword id="KW-0964">Secreted</keyword>
<keyword id="KW-0800">Toxin</keyword>
<dbReference type="GO" id="GO:0005576">
    <property type="term" value="C:extracellular region"/>
    <property type="evidence" value="ECO:0007005"/>
    <property type="project" value="UniProtKB"/>
</dbReference>
<dbReference type="GO" id="GO:0090729">
    <property type="term" value="F:toxin activity"/>
    <property type="evidence" value="ECO:0007669"/>
    <property type="project" value="UniProtKB-KW"/>
</dbReference>
<evidence type="ECO:0000269" key="1">
    <source>
    </source>
</evidence>
<evidence type="ECO:0000303" key="2">
    <source>
    </source>
</evidence>
<evidence type="ECO:0000305" key="3"/>